<gene>
    <name type="primary">atg12</name>
    <name type="ORF">SPAC1783.06c</name>
</gene>
<name>ATG12_SCHPO</name>
<proteinExistence type="inferred from homology"/>
<comment type="function">
    <text evidence="1 3">Ubiquitin-like protein involved in cytoplasm to vacuole transport (Cvt), autophagy vesicles formation, mitophagy, and nucleophagy. Conjugation with atg5 through a ubiquitin-like conjugating system involving also atg7 as an E1-like activating enzyme and atg10 as an E2-like conjugating enzyme, is essential for its function. The atg12-atg5 conjugate functions as an E3-like enzyme which is required for lipidation of atg8 and atg8 association to the vesicle membranes (By similarity). Plays a role in meiosis and sporulation.</text>
</comment>
<comment type="subunit">
    <text>Forms a conjugate with atg5.</text>
</comment>
<comment type="subcellular location">
    <subcellularLocation>
        <location evidence="2">Cytoplasm</location>
    </subcellularLocation>
    <subcellularLocation>
        <location evidence="2">Nucleus</location>
    </subcellularLocation>
    <subcellularLocation>
        <location evidence="1">Preautophagosomal structure membrane</location>
        <topology evidence="1">Peripheral membrane protein</topology>
    </subcellularLocation>
</comment>
<comment type="disruption phenotype">
    <text evidence="4">Impairs atg8-processing.</text>
</comment>
<comment type="similarity">
    <text evidence="5">Belongs to the ATG12 family.</text>
</comment>
<dbReference type="EMBL" id="CU329670">
    <property type="protein sequence ID" value="CAB66169.1"/>
    <property type="molecule type" value="Genomic_DNA"/>
</dbReference>
<dbReference type="PIR" id="T50108">
    <property type="entry name" value="T50108"/>
</dbReference>
<dbReference type="RefSeq" id="NP_593661.1">
    <property type="nucleotide sequence ID" value="NM_001019093.2"/>
</dbReference>
<dbReference type="SMR" id="Q9US24"/>
<dbReference type="BioGRID" id="278832">
    <property type="interactions" value="7"/>
</dbReference>
<dbReference type="FunCoup" id="Q9US24">
    <property type="interactions" value="248"/>
</dbReference>
<dbReference type="STRING" id="284812.Q9US24"/>
<dbReference type="iPTMnet" id="Q9US24"/>
<dbReference type="PaxDb" id="4896-SPAC1783.06c.1"/>
<dbReference type="EnsemblFungi" id="SPAC1783.06c.1">
    <property type="protein sequence ID" value="SPAC1783.06c.1:pep"/>
    <property type="gene ID" value="SPAC1783.06c"/>
</dbReference>
<dbReference type="GeneID" id="2542368"/>
<dbReference type="KEGG" id="spo:2542368"/>
<dbReference type="PomBase" id="SPAC1783.06c">
    <property type="gene designation" value="atg12"/>
</dbReference>
<dbReference type="VEuPathDB" id="FungiDB:SPAC1783.06c"/>
<dbReference type="eggNOG" id="KOG3439">
    <property type="taxonomic scope" value="Eukaryota"/>
</dbReference>
<dbReference type="HOGENOM" id="CLU_106795_3_0_1"/>
<dbReference type="InParanoid" id="Q9US24"/>
<dbReference type="OMA" id="YAKTHAW"/>
<dbReference type="PhylomeDB" id="Q9US24"/>
<dbReference type="Reactome" id="R-SPO-1632852">
    <property type="pathway name" value="Macroautophagy"/>
</dbReference>
<dbReference type="Reactome" id="R-SPO-8934903">
    <property type="pathway name" value="Receptor Mediated Mitophagy"/>
</dbReference>
<dbReference type="PRO" id="PR:Q9US24"/>
<dbReference type="Proteomes" id="UP000002485">
    <property type="component" value="Chromosome I"/>
</dbReference>
<dbReference type="GO" id="GO:0034274">
    <property type="term" value="C:Atg12-Atg5-Atg16 complex"/>
    <property type="evidence" value="ECO:0000318"/>
    <property type="project" value="GO_Central"/>
</dbReference>
<dbReference type="GO" id="GO:0000421">
    <property type="term" value="C:autophagosome membrane"/>
    <property type="evidence" value="ECO:0000318"/>
    <property type="project" value="GO_Central"/>
</dbReference>
<dbReference type="GO" id="GO:0005829">
    <property type="term" value="C:cytosol"/>
    <property type="evidence" value="ECO:0007005"/>
    <property type="project" value="PomBase"/>
</dbReference>
<dbReference type="GO" id="GO:0005634">
    <property type="term" value="C:nucleus"/>
    <property type="evidence" value="ECO:0007005"/>
    <property type="project" value="PomBase"/>
</dbReference>
<dbReference type="GO" id="GO:0034045">
    <property type="term" value="C:phagophore assembly site membrane"/>
    <property type="evidence" value="ECO:0000318"/>
    <property type="project" value="GO_Central"/>
</dbReference>
<dbReference type="GO" id="GO:0031386">
    <property type="term" value="F:protein tag activity"/>
    <property type="evidence" value="ECO:0000318"/>
    <property type="project" value="GO_Central"/>
</dbReference>
<dbReference type="GO" id="GO:0000045">
    <property type="term" value="P:autophagosome assembly"/>
    <property type="evidence" value="ECO:0000318"/>
    <property type="project" value="GO_Central"/>
</dbReference>
<dbReference type="GO" id="GO:0097352">
    <property type="term" value="P:autophagosome maturation"/>
    <property type="evidence" value="ECO:0000318"/>
    <property type="project" value="GO_Central"/>
</dbReference>
<dbReference type="GO" id="GO:0000422">
    <property type="term" value="P:autophagy of mitochondrion"/>
    <property type="evidence" value="ECO:0000318"/>
    <property type="project" value="GO_Central"/>
</dbReference>
<dbReference type="GO" id="GO:0061723">
    <property type="term" value="P:glycophagy"/>
    <property type="evidence" value="ECO:0000318"/>
    <property type="project" value="GO_Central"/>
</dbReference>
<dbReference type="GO" id="GO:0016236">
    <property type="term" value="P:macroautophagy"/>
    <property type="evidence" value="ECO:0000315"/>
    <property type="project" value="PomBase"/>
</dbReference>
<dbReference type="GO" id="GO:0034727">
    <property type="term" value="P:piecemeal microautophagy of the nucleus"/>
    <property type="evidence" value="ECO:0000318"/>
    <property type="project" value="GO_Central"/>
</dbReference>
<dbReference type="GO" id="GO:0015031">
    <property type="term" value="P:protein transport"/>
    <property type="evidence" value="ECO:0007669"/>
    <property type="project" value="UniProtKB-KW"/>
</dbReference>
<dbReference type="CDD" id="cd01612">
    <property type="entry name" value="Ubl_ATG12"/>
    <property type="match status" value="1"/>
</dbReference>
<dbReference type="FunFam" id="3.10.20.90:FF:000150">
    <property type="entry name" value="Ubiquitin-like protein ATG12"/>
    <property type="match status" value="1"/>
</dbReference>
<dbReference type="Gene3D" id="3.10.20.90">
    <property type="entry name" value="Phosphatidylinositol 3-kinase Catalytic Subunit, Chain A, domain 1"/>
    <property type="match status" value="1"/>
</dbReference>
<dbReference type="InterPro" id="IPR007242">
    <property type="entry name" value="Atg12"/>
</dbReference>
<dbReference type="InterPro" id="IPR029071">
    <property type="entry name" value="Ubiquitin-like_domsf"/>
</dbReference>
<dbReference type="PANTHER" id="PTHR13385">
    <property type="entry name" value="AUTOPHAGY PROTEIN 12"/>
    <property type="match status" value="1"/>
</dbReference>
<dbReference type="PANTHER" id="PTHR13385:SF0">
    <property type="entry name" value="UBIQUITIN-LIKE PROTEIN ATG12"/>
    <property type="match status" value="1"/>
</dbReference>
<dbReference type="Pfam" id="PF04110">
    <property type="entry name" value="APG12"/>
    <property type="match status" value="1"/>
</dbReference>
<dbReference type="SUPFAM" id="SSF54236">
    <property type="entry name" value="Ubiquitin-like"/>
    <property type="match status" value="1"/>
</dbReference>
<sequence length="132" mass="15154">MTGLVDQQELEKRLATEEDSQNEDIENQLPSIETIINTYREKENRRVNLRFKAIGRTPLLRKTVFSINASQRFEKVTRFLKKELGLPMNSSLVLYVNSSFAPSPDEIVGNLYDNFAIDSHLLINYCINVAFG</sequence>
<protein>
    <recommendedName>
        <fullName>Ubiquitin-like protein ATG12</fullName>
    </recommendedName>
    <alternativeName>
        <fullName>Autophagy-related protein 12</fullName>
    </alternativeName>
</protein>
<feature type="chain" id="PRO_0000212483" description="Ubiquitin-like protein ATG12">
    <location>
        <begin position="1"/>
        <end position="132"/>
    </location>
</feature>
<feature type="cross-link" description="Glycyl lysine isopeptide (Gly-Lys) (interchain with K-148 in ATG5)" evidence="1">
    <location>
        <position position="132"/>
    </location>
</feature>
<evidence type="ECO:0000250" key="1"/>
<evidence type="ECO:0000269" key="2">
    <source>
    </source>
</evidence>
<evidence type="ECO:0000269" key="3">
    <source>
    </source>
</evidence>
<evidence type="ECO:0000269" key="4">
    <source>
    </source>
</evidence>
<evidence type="ECO:0000305" key="5"/>
<keyword id="KW-0072">Autophagy</keyword>
<keyword id="KW-0963">Cytoplasm</keyword>
<keyword id="KW-1017">Isopeptide bond</keyword>
<keyword id="KW-0472">Membrane</keyword>
<keyword id="KW-0539">Nucleus</keyword>
<keyword id="KW-0653">Protein transport</keyword>
<keyword id="KW-1185">Reference proteome</keyword>
<keyword id="KW-0813">Transport</keyword>
<keyword id="KW-0833">Ubl conjugation pathway</keyword>
<reference key="1">
    <citation type="journal article" date="2002" name="Nature">
        <title>The genome sequence of Schizosaccharomyces pombe.</title>
        <authorList>
            <person name="Wood V."/>
            <person name="Gwilliam R."/>
            <person name="Rajandream M.A."/>
            <person name="Lyne M.H."/>
            <person name="Lyne R."/>
            <person name="Stewart A."/>
            <person name="Sgouros J.G."/>
            <person name="Peat N."/>
            <person name="Hayles J."/>
            <person name="Baker S.G."/>
            <person name="Basham D."/>
            <person name="Bowman S."/>
            <person name="Brooks K."/>
            <person name="Brown D."/>
            <person name="Brown S."/>
            <person name="Chillingworth T."/>
            <person name="Churcher C.M."/>
            <person name="Collins M."/>
            <person name="Connor R."/>
            <person name="Cronin A."/>
            <person name="Davis P."/>
            <person name="Feltwell T."/>
            <person name="Fraser A."/>
            <person name="Gentles S."/>
            <person name="Goble A."/>
            <person name="Hamlin N."/>
            <person name="Harris D.E."/>
            <person name="Hidalgo J."/>
            <person name="Hodgson G."/>
            <person name="Holroyd S."/>
            <person name="Hornsby T."/>
            <person name="Howarth S."/>
            <person name="Huckle E.J."/>
            <person name="Hunt S."/>
            <person name="Jagels K."/>
            <person name="James K.D."/>
            <person name="Jones L."/>
            <person name="Jones M."/>
            <person name="Leather S."/>
            <person name="McDonald S."/>
            <person name="McLean J."/>
            <person name="Mooney P."/>
            <person name="Moule S."/>
            <person name="Mungall K.L."/>
            <person name="Murphy L.D."/>
            <person name="Niblett D."/>
            <person name="Odell C."/>
            <person name="Oliver K."/>
            <person name="O'Neil S."/>
            <person name="Pearson D."/>
            <person name="Quail M.A."/>
            <person name="Rabbinowitsch E."/>
            <person name="Rutherford K.M."/>
            <person name="Rutter S."/>
            <person name="Saunders D."/>
            <person name="Seeger K."/>
            <person name="Sharp S."/>
            <person name="Skelton J."/>
            <person name="Simmonds M.N."/>
            <person name="Squares R."/>
            <person name="Squares S."/>
            <person name="Stevens K."/>
            <person name="Taylor K."/>
            <person name="Taylor R.G."/>
            <person name="Tivey A."/>
            <person name="Walsh S.V."/>
            <person name="Warren T."/>
            <person name="Whitehead S."/>
            <person name="Woodward J.R."/>
            <person name="Volckaert G."/>
            <person name="Aert R."/>
            <person name="Robben J."/>
            <person name="Grymonprez B."/>
            <person name="Weltjens I."/>
            <person name="Vanstreels E."/>
            <person name="Rieger M."/>
            <person name="Schaefer M."/>
            <person name="Mueller-Auer S."/>
            <person name="Gabel C."/>
            <person name="Fuchs M."/>
            <person name="Duesterhoeft A."/>
            <person name="Fritzc C."/>
            <person name="Holzer E."/>
            <person name="Moestl D."/>
            <person name="Hilbert H."/>
            <person name="Borzym K."/>
            <person name="Langer I."/>
            <person name="Beck A."/>
            <person name="Lehrach H."/>
            <person name="Reinhardt R."/>
            <person name="Pohl T.M."/>
            <person name="Eger P."/>
            <person name="Zimmermann W."/>
            <person name="Wedler H."/>
            <person name="Wambutt R."/>
            <person name="Purnelle B."/>
            <person name="Goffeau A."/>
            <person name="Cadieu E."/>
            <person name="Dreano S."/>
            <person name="Gloux S."/>
            <person name="Lelaure V."/>
            <person name="Mottier S."/>
            <person name="Galibert F."/>
            <person name="Aves S.J."/>
            <person name="Xiang Z."/>
            <person name="Hunt C."/>
            <person name="Moore K."/>
            <person name="Hurst S.M."/>
            <person name="Lucas M."/>
            <person name="Rochet M."/>
            <person name="Gaillardin C."/>
            <person name="Tallada V.A."/>
            <person name="Garzon A."/>
            <person name="Thode G."/>
            <person name="Daga R.R."/>
            <person name="Cruzado L."/>
            <person name="Jimenez J."/>
            <person name="Sanchez M."/>
            <person name="del Rey F."/>
            <person name="Benito J."/>
            <person name="Dominguez A."/>
            <person name="Revuelta J.L."/>
            <person name="Moreno S."/>
            <person name="Armstrong J."/>
            <person name="Forsburg S.L."/>
            <person name="Cerutti L."/>
            <person name="Lowe T."/>
            <person name="McCombie W.R."/>
            <person name="Paulsen I."/>
            <person name="Potashkin J."/>
            <person name="Shpakovski G.V."/>
            <person name="Ussery D."/>
            <person name="Barrell B.G."/>
            <person name="Nurse P."/>
        </authorList>
    </citation>
    <scope>NUCLEOTIDE SEQUENCE [LARGE SCALE GENOMIC DNA]</scope>
    <source>
        <strain>972 / ATCC 24843</strain>
    </source>
</reference>
<reference key="2">
    <citation type="journal article" date="2006" name="Nat. Biotechnol.">
        <title>ORFeome cloning and global analysis of protein localization in the fission yeast Schizosaccharomyces pombe.</title>
        <authorList>
            <person name="Matsuyama A."/>
            <person name="Arai R."/>
            <person name="Yashiroda Y."/>
            <person name="Shirai A."/>
            <person name="Kamata A."/>
            <person name="Sekido S."/>
            <person name="Kobayashi Y."/>
            <person name="Hashimoto A."/>
            <person name="Hamamoto M."/>
            <person name="Hiraoka Y."/>
            <person name="Horinouchi S."/>
            <person name="Yoshida M."/>
        </authorList>
    </citation>
    <scope>SUBCELLULAR LOCATION [LARGE SCALE ANALYSIS]</scope>
</reference>
<reference key="3">
    <citation type="journal article" date="2009" name="Microbiology">
        <title>Autophagy-deficient Schizosaccharomyces pombe mutants undergo partial sporulation during nitrogen starvation.</title>
        <authorList>
            <person name="Mukaiyama H."/>
            <person name="Kajiwara S."/>
            <person name="Hosomi A."/>
            <person name="Giga-Hama Y."/>
            <person name="Tanaka N."/>
            <person name="Nakamura T."/>
            <person name="Takegawa K."/>
        </authorList>
    </citation>
    <scope>FUNCTION</scope>
</reference>
<reference key="4">
    <citation type="journal article" date="2013" name="PLoS Genet.">
        <title>Global analysis of fission yeast mating genes reveals new autophagy factors.</title>
        <authorList>
            <person name="Sun L.L."/>
            <person name="Li M."/>
            <person name="Suo F."/>
            <person name="Liu X.M."/>
            <person name="Shen E.Z."/>
            <person name="Yang B."/>
            <person name="Dong M.Q."/>
            <person name="He W.Z."/>
            <person name="Du L.L."/>
        </authorList>
    </citation>
    <scope>DISRUPTION PHENOTYPE</scope>
    <scope>CONJUGATION TO ATG5</scope>
</reference>
<accession>Q9US24</accession>
<organism>
    <name type="scientific">Schizosaccharomyces pombe (strain 972 / ATCC 24843)</name>
    <name type="common">Fission yeast</name>
    <dbReference type="NCBI Taxonomy" id="284812"/>
    <lineage>
        <taxon>Eukaryota</taxon>
        <taxon>Fungi</taxon>
        <taxon>Dikarya</taxon>
        <taxon>Ascomycota</taxon>
        <taxon>Taphrinomycotina</taxon>
        <taxon>Schizosaccharomycetes</taxon>
        <taxon>Schizosaccharomycetales</taxon>
        <taxon>Schizosaccharomycetaceae</taxon>
        <taxon>Schizosaccharomyces</taxon>
    </lineage>
</organism>